<proteinExistence type="inferred from homology"/>
<accession>A6QDG6</accession>
<sequence length="254" mass="27739">MKFIVIKIGGSTLSDMHPSIINNIKHLRSNNIYPIIVHGGGPFINEALSNQQIEPHFVNGLRVTDKATMTITKHTLIADVNTALVAQFNQHQCSAIGLCGLDAQLFEITSFDQQYGYVGVPTALNKDALQYLCTKFVPIINSIGFNNHDGEFYNINADTLAYFIASSLKAPIYVLSNIAGVLINDVVIPQLPLVDIHQYIEHGDIYGGMIPKVLDAKNAIENGCPKVIIASGNKPNIIESIYNNDFVGTTILNS</sequence>
<gene>
    <name evidence="1" type="primary">argB</name>
    <name type="ordered locus">NWMN_0126</name>
</gene>
<comment type="function">
    <text evidence="1">Catalyzes the ATP-dependent phosphorylation of N-acetyl-L-glutamate.</text>
</comment>
<comment type="catalytic activity">
    <reaction evidence="1">
        <text>N-acetyl-L-glutamate + ATP = N-acetyl-L-glutamyl 5-phosphate + ADP</text>
        <dbReference type="Rhea" id="RHEA:14629"/>
        <dbReference type="ChEBI" id="CHEBI:30616"/>
        <dbReference type="ChEBI" id="CHEBI:44337"/>
        <dbReference type="ChEBI" id="CHEBI:57936"/>
        <dbReference type="ChEBI" id="CHEBI:456216"/>
        <dbReference type="EC" id="2.7.2.8"/>
    </reaction>
</comment>
<comment type="pathway">
    <text evidence="1">Amino-acid biosynthesis; L-arginine biosynthesis; N(2)-acetyl-L-ornithine from L-glutamate: step 2/4.</text>
</comment>
<comment type="subcellular location">
    <subcellularLocation>
        <location evidence="1">Cytoplasm</location>
    </subcellularLocation>
</comment>
<comment type="similarity">
    <text evidence="1">Belongs to the acetylglutamate kinase family. ArgB subfamily.</text>
</comment>
<reference key="1">
    <citation type="journal article" date="2008" name="J. Bacteriol.">
        <title>Genome sequence of Staphylococcus aureus strain Newman and comparative analysis of staphylococcal genomes: polymorphism and evolution of two major pathogenicity islands.</title>
        <authorList>
            <person name="Baba T."/>
            <person name="Bae T."/>
            <person name="Schneewind O."/>
            <person name="Takeuchi F."/>
            <person name="Hiramatsu K."/>
        </authorList>
    </citation>
    <scope>NUCLEOTIDE SEQUENCE [LARGE SCALE GENOMIC DNA]</scope>
    <source>
        <strain>Newman</strain>
    </source>
</reference>
<protein>
    <recommendedName>
        <fullName evidence="1">Acetylglutamate kinase</fullName>
        <ecNumber evidence="1">2.7.2.8</ecNumber>
    </recommendedName>
    <alternativeName>
        <fullName evidence="1">N-acetyl-L-glutamate 5-phosphotransferase</fullName>
    </alternativeName>
    <alternativeName>
        <fullName evidence="1">NAG kinase</fullName>
        <shortName evidence="1">NAGK</shortName>
    </alternativeName>
</protein>
<organism>
    <name type="scientific">Staphylococcus aureus (strain Newman)</name>
    <dbReference type="NCBI Taxonomy" id="426430"/>
    <lineage>
        <taxon>Bacteria</taxon>
        <taxon>Bacillati</taxon>
        <taxon>Bacillota</taxon>
        <taxon>Bacilli</taxon>
        <taxon>Bacillales</taxon>
        <taxon>Staphylococcaceae</taxon>
        <taxon>Staphylococcus</taxon>
    </lineage>
</organism>
<feature type="chain" id="PRO_1000071220" description="Acetylglutamate kinase">
    <location>
        <begin position="1"/>
        <end position="254"/>
    </location>
</feature>
<feature type="binding site" evidence="1">
    <location>
        <begin position="40"/>
        <end position="41"/>
    </location>
    <ligand>
        <name>substrate</name>
    </ligand>
</feature>
<feature type="binding site" evidence="1">
    <location>
        <position position="62"/>
    </location>
    <ligand>
        <name>substrate</name>
    </ligand>
</feature>
<feature type="binding site" evidence="1">
    <location>
        <position position="154"/>
    </location>
    <ligand>
        <name>substrate</name>
    </ligand>
</feature>
<feature type="site" description="Transition state stabilizer" evidence="1">
    <location>
        <position position="7"/>
    </location>
</feature>
<feature type="site" description="Transition state stabilizer" evidence="1">
    <location>
        <position position="212"/>
    </location>
</feature>
<dbReference type="EC" id="2.7.2.8" evidence="1"/>
<dbReference type="EMBL" id="AP009351">
    <property type="protein sequence ID" value="BAF66398.1"/>
    <property type="molecule type" value="Genomic_DNA"/>
</dbReference>
<dbReference type="RefSeq" id="WP_000668894.1">
    <property type="nucleotide sequence ID" value="NZ_JBBIAE010000003.1"/>
</dbReference>
<dbReference type="SMR" id="A6QDG6"/>
<dbReference type="KEGG" id="sae:NWMN_0126"/>
<dbReference type="HOGENOM" id="CLU_053680_1_0_9"/>
<dbReference type="UniPathway" id="UPA00068">
    <property type="reaction ID" value="UER00107"/>
</dbReference>
<dbReference type="Proteomes" id="UP000006386">
    <property type="component" value="Chromosome"/>
</dbReference>
<dbReference type="GO" id="GO:0005737">
    <property type="term" value="C:cytoplasm"/>
    <property type="evidence" value="ECO:0007669"/>
    <property type="project" value="UniProtKB-SubCell"/>
</dbReference>
<dbReference type="GO" id="GO:0003991">
    <property type="term" value="F:acetylglutamate kinase activity"/>
    <property type="evidence" value="ECO:0007669"/>
    <property type="project" value="UniProtKB-UniRule"/>
</dbReference>
<dbReference type="GO" id="GO:0005524">
    <property type="term" value="F:ATP binding"/>
    <property type="evidence" value="ECO:0007669"/>
    <property type="project" value="UniProtKB-UniRule"/>
</dbReference>
<dbReference type="GO" id="GO:0042450">
    <property type="term" value="P:arginine biosynthetic process via ornithine"/>
    <property type="evidence" value="ECO:0007669"/>
    <property type="project" value="UniProtKB-UniRule"/>
</dbReference>
<dbReference type="GO" id="GO:0006526">
    <property type="term" value="P:L-arginine biosynthetic process"/>
    <property type="evidence" value="ECO:0007669"/>
    <property type="project" value="UniProtKB-UniPathway"/>
</dbReference>
<dbReference type="CDD" id="cd04238">
    <property type="entry name" value="AAK_NAGK-like"/>
    <property type="match status" value="1"/>
</dbReference>
<dbReference type="FunFam" id="3.40.1160.10:FF:000037">
    <property type="entry name" value="Acetylglutamate kinase"/>
    <property type="match status" value="1"/>
</dbReference>
<dbReference type="Gene3D" id="3.40.1160.10">
    <property type="entry name" value="Acetylglutamate kinase-like"/>
    <property type="match status" value="1"/>
</dbReference>
<dbReference type="HAMAP" id="MF_00082">
    <property type="entry name" value="ArgB"/>
    <property type="match status" value="1"/>
</dbReference>
<dbReference type="InterPro" id="IPR036393">
    <property type="entry name" value="AceGlu_kinase-like_sf"/>
</dbReference>
<dbReference type="InterPro" id="IPR004662">
    <property type="entry name" value="AcgluKinase_fam"/>
</dbReference>
<dbReference type="InterPro" id="IPR037528">
    <property type="entry name" value="ArgB"/>
</dbReference>
<dbReference type="InterPro" id="IPR001048">
    <property type="entry name" value="Asp/Glu/Uridylate_kinase"/>
</dbReference>
<dbReference type="NCBIfam" id="TIGR00761">
    <property type="entry name" value="argB"/>
    <property type="match status" value="1"/>
</dbReference>
<dbReference type="PANTHER" id="PTHR23342">
    <property type="entry name" value="N-ACETYLGLUTAMATE SYNTHASE"/>
    <property type="match status" value="1"/>
</dbReference>
<dbReference type="PANTHER" id="PTHR23342:SF0">
    <property type="entry name" value="N-ACETYLGLUTAMATE SYNTHASE, MITOCHONDRIAL"/>
    <property type="match status" value="1"/>
</dbReference>
<dbReference type="Pfam" id="PF00696">
    <property type="entry name" value="AA_kinase"/>
    <property type="match status" value="1"/>
</dbReference>
<dbReference type="PIRSF" id="PIRSF000728">
    <property type="entry name" value="NAGK"/>
    <property type="match status" value="1"/>
</dbReference>
<dbReference type="SUPFAM" id="SSF53633">
    <property type="entry name" value="Carbamate kinase-like"/>
    <property type="match status" value="1"/>
</dbReference>
<name>ARGB_STAAE</name>
<keyword id="KW-0028">Amino-acid biosynthesis</keyword>
<keyword id="KW-0055">Arginine biosynthesis</keyword>
<keyword id="KW-0067">ATP-binding</keyword>
<keyword id="KW-0963">Cytoplasm</keyword>
<keyword id="KW-0418">Kinase</keyword>
<keyword id="KW-0547">Nucleotide-binding</keyword>
<keyword id="KW-0808">Transferase</keyword>
<evidence type="ECO:0000255" key="1">
    <source>
        <dbReference type="HAMAP-Rule" id="MF_00082"/>
    </source>
</evidence>